<evidence type="ECO:0000255" key="1">
    <source>
        <dbReference type="HAMAP-Rule" id="MF_01681"/>
    </source>
</evidence>
<name>MTNC_SHESM</name>
<organism>
    <name type="scientific">Shewanella sp. (strain MR-4)</name>
    <dbReference type="NCBI Taxonomy" id="60480"/>
    <lineage>
        <taxon>Bacteria</taxon>
        <taxon>Pseudomonadati</taxon>
        <taxon>Pseudomonadota</taxon>
        <taxon>Gammaproteobacteria</taxon>
        <taxon>Alteromonadales</taxon>
        <taxon>Shewanellaceae</taxon>
        <taxon>Shewanella</taxon>
    </lineage>
</organism>
<protein>
    <recommendedName>
        <fullName evidence="1">Enolase-phosphatase E1</fullName>
        <ecNumber evidence="1">3.1.3.77</ecNumber>
    </recommendedName>
    <alternativeName>
        <fullName evidence="1">2,3-diketo-5-methylthio-1-phosphopentane phosphatase</fullName>
    </alternativeName>
</protein>
<feature type="chain" id="PRO_0000357409" description="Enolase-phosphatase E1">
    <location>
        <begin position="1"/>
        <end position="226"/>
    </location>
</feature>
<reference key="1">
    <citation type="submission" date="2006-08" db="EMBL/GenBank/DDBJ databases">
        <title>Complete sequence of Shewanella sp. MR-4.</title>
        <authorList>
            <consortium name="US DOE Joint Genome Institute"/>
            <person name="Copeland A."/>
            <person name="Lucas S."/>
            <person name="Lapidus A."/>
            <person name="Barry K."/>
            <person name="Detter J.C."/>
            <person name="Glavina del Rio T."/>
            <person name="Hammon N."/>
            <person name="Israni S."/>
            <person name="Dalin E."/>
            <person name="Tice H."/>
            <person name="Pitluck S."/>
            <person name="Kiss H."/>
            <person name="Brettin T."/>
            <person name="Bruce D."/>
            <person name="Han C."/>
            <person name="Tapia R."/>
            <person name="Gilna P."/>
            <person name="Schmutz J."/>
            <person name="Larimer F."/>
            <person name="Land M."/>
            <person name="Hauser L."/>
            <person name="Kyrpides N."/>
            <person name="Mikhailova N."/>
            <person name="Nealson K."/>
            <person name="Konstantinidis K."/>
            <person name="Klappenbach J."/>
            <person name="Tiedje J."/>
            <person name="Richardson P."/>
        </authorList>
    </citation>
    <scope>NUCLEOTIDE SEQUENCE [LARGE SCALE GENOMIC DNA]</scope>
    <source>
        <strain>MR-4</strain>
    </source>
</reference>
<sequence length="226" mass="25267">MGIRAIVVDTAGTTTDLTFIQDVLFPYSVKALPDFLAQNQHNVLVENCICDTRDIALEPDADLARVTEILQQWVHEDRKATPLKTLQGLIWKQGYAHGEFTGHIFPDFIEAVNRFSAQKLRIYSFSSGSVEAQKLLFSHSDGGDLTEMFSGHFDTRTGNKLDKQAYANILNTISLSPKQVLFVSDVVEELKAAEAAGMMTCQMVRDSKQRTGDFRTINSFDELVID</sequence>
<keyword id="KW-0028">Amino-acid biosynthesis</keyword>
<keyword id="KW-0378">Hydrolase</keyword>
<keyword id="KW-0460">Magnesium</keyword>
<keyword id="KW-0479">Metal-binding</keyword>
<keyword id="KW-0486">Methionine biosynthesis</keyword>
<dbReference type="EC" id="3.1.3.77" evidence="1"/>
<dbReference type="EMBL" id="CP000446">
    <property type="protein sequence ID" value="ABI37171.1"/>
    <property type="molecule type" value="Genomic_DNA"/>
</dbReference>
<dbReference type="RefSeq" id="WP_011620924.1">
    <property type="nucleotide sequence ID" value="NC_008321.1"/>
</dbReference>
<dbReference type="SMR" id="Q0HP46"/>
<dbReference type="KEGG" id="she:Shewmr4_0090"/>
<dbReference type="HOGENOM" id="CLU_023273_0_0_6"/>
<dbReference type="UniPathway" id="UPA00904">
    <property type="reaction ID" value="UER00876"/>
</dbReference>
<dbReference type="UniPathway" id="UPA00904">
    <property type="reaction ID" value="UER00877"/>
</dbReference>
<dbReference type="GO" id="GO:0043715">
    <property type="term" value="F:2,3-diketo-5-methylthiopentyl-1-phosphate enolase activity"/>
    <property type="evidence" value="ECO:0007669"/>
    <property type="project" value="UniProtKB-UniRule"/>
</dbReference>
<dbReference type="GO" id="GO:0043716">
    <property type="term" value="F:2-hydroxy-3-keto-5-methylthiopentenyl-1-phosphate phosphatase activity"/>
    <property type="evidence" value="ECO:0007669"/>
    <property type="project" value="UniProtKB-UniRule"/>
</dbReference>
<dbReference type="GO" id="GO:0043874">
    <property type="term" value="F:acireductone synthase activity"/>
    <property type="evidence" value="ECO:0007669"/>
    <property type="project" value="UniProtKB-EC"/>
</dbReference>
<dbReference type="GO" id="GO:0000287">
    <property type="term" value="F:magnesium ion binding"/>
    <property type="evidence" value="ECO:0007669"/>
    <property type="project" value="UniProtKB-UniRule"/>
</dbReference>
<dbReference type="GO" id="GO:0019509">
    <property type="term" value="P:L-methionine salvage from methylthioadenosine"/>
    <property type="evidence" value="ECO:0007669"/>
    <property type="project" value="UniProtKB-UniRule"/>
</dbReference>
<dbReference type="CDD" id="cd01629">
    <property type="entry name" value="HAD_EP"/>
    <property type="match status" value="1"/>
</dbReference>
<dbReference type="FunFam" id="1.10.720.60:FF:000008">
    <property type="entry name" value="Enolase-phosphatase E1"/>
    <property type="match status" value="1"/>
</dbReference>
<dbReference type="Gene3D" id="1.10.720.60">
    <property type="match status" value="1"/>
</dbReference>
<dbReference type="Gene3D" id="3.40.50.1000">
    <property type="entry name" value="HAD superfamily/HAD-like"/>
    <property type="match status" value="1"/>
</dbReference>
<dbReference type="HAMAP" id="MF_01681">
    <property type="entry name" value="Salvage_MtnC"/>
    <property type="match status" value="1"/>
</dbReference>
<dbReference type="InterPro" id="IPR023943">
    <property type="entry name" value="Enolase-ppase_E1"/>
</dbReference>
<dbReference type="InterPro" id="IPR036412">
    <property type="entry name" value="HAD-like_sf"/>
</dbReference>
<dbReference type="InterPro" id="IPR006439">
    <property type="entry name" value="HAD-SF_hydro_IA"/>
</dbReference>
<dbReference type="InterPro" id="IPR023214">
    <property type="entry name" value="HAD_sf"/>
</dbReference>
<dbReference type="NCBIfam" id="TIGR01691">
    <property type="entry name" value="enolase-ppase"/>
    <property type="match status" value="1"/>
</dbReference>
<dbReference type="NCBIfam" id="TIGR01549">
    <property type="entry name" value="HAD-SF-IA-v1"/>
    <property type="match status" value="1"/>
</dbReference>
<dbReference type="PANTHER" id="PTHR20371">
    <property type="entry name" value="ENOLASE-PHOSPHATASE E1"/>
    <property type="match status" value="1"/>
</dbReference>
<dbReference type="PANTHER" id="PTHR20371:SF1">
    <property type="entry name" value="ENOLASE-PHOSPHATASE E1"/>
    <property type="match status" value="1"/>
</dbReference>
<dbReference type="Pfam" id="PF00702">
    <property type="entry name" value="Hydrolase"/>
    <property type="match status" value="1"/>
</dbReference>
<dbReference type="PRINTS" id="PR00413">
    <property type="entry name" value="HADHALOGNASE"/>
</dbReference>
<dbReference type="SFLD" id="SFLDG01133">
    <property type="entry name" value="C1.5.4:_Enolase-phosphatase_Li"/>
    <property type="match status" value="1"/>
</dbReference>
<dbReference type="SFLD" id="SFLDF00044">
    <property type="entry name" value="enolase-phosphatase"/>
    <property type="match status" value="1"/>
</dbReference>
<dbReference type="SUPFAM" id="SSF56784">
    <property type="entry name" value="HAD-like"/>
    <property type="match status" value="1"/>
</dbReference>
<proteinExistence type="inferred from homology"/>
<accession>Q0HP46</accession>
<comment type="function">
    <text evidence="1">Bifunctional enzyme that catalyzes the enolization of 2,3-diketo-5-methylthiopentyl-1-phosphate (DK-MTP-1-P) into the intermediate 2-hydroxy-3-keto-5-methylthiopentenyl-1-phosphate (HK-MTPenyl-1-P), which is then dephosphorylated to form the acireductone 1,2-dihydroxy-3-keto-5-methylthiopentene (DHK-MTPene).</text>
</comment>
<comment type="catalytic activity">
    <reaction evidence="1">
        <text>5-methylsulfanyl-2,3-dioxopentyl phosphate + H2O = 1,2-dihydroxy-5-(methylsulfanyl)pent-1-en-3-one + phosphate</text>
        <dbReference type="Rhea" id="RHEA:21700"/>
        <dbReference type="ChEBI" id="CHEBI:15377"/>
        <dbReference type="ChEBI" id="CHEBI:43474"/>
        <dbReference type="ChEBI" id="CHEBI:49252"/>
        <dbReference type="ChEBI" id="CHEBI:58828"/>
        <dbReference type="EC" id="3.1.3.77"/>
    </reaction>
</comment>
<comment type="cofactor">
    <cofactor evidence="1">
        <name>Mg(2+)</name>
        <dbReference type="ChEBI" id="CHEBI:18420"/>
    </cofactor>
    <text evidence="1">Binds 1 Mg(2+) ion per subunit.</text>
</comment>
<comment type="pathway">
    <text evidence="1">Amino-acid biosynthesis; L-methionine biosynthesis via salvage pathway; L-methionine from S-methyl-5-thio-alpha-D-ribose 1-phosphate: step 3/6.</text>
</comment>
<comment type="pathway">
    <text evidence="1">Amino-acid biosynthesis; L-methionine biosynthesis via salvage pathway; L-methionine from S-methyl-5-thio-alpha-D-ribose 1-phosphate: step 4/6.</text>
</comment>
<comment type="subunit">
    <text evidence="1">Monomer.</text>
</comment>
<comment type="similarity">
    <text evidence="1">Belongs to the HAD-like hydrolase superfamily. MasA/MtnC family.</text>
</comment>
<gene>
    <name evidence="1" type="primary">mtnC</name>
    <name type="ordered locus">Shewmr4_0090</name>
</gene>